<protein>
    <recommendedName>
        <fullName evidence="1">Ribonuclease PH</fullName>
        <shortName evidence="1">RNase PH</shortName>
        <ecNumber evidence="1">2.7.7.56</ecNumber>
    </recommendedName>
    <alternativeName>
        <fullName evidence="1">tRNA nucleotidyltransferase</fullName>
    </alternativeName>
</protein>
<dbReference type="EC" id="2.7.7.56" evidence="1"/>
<dbReference type="EMBL" id="CP000247">
    <property type="protein sequence ID" value="ABG71713.1"/>
    <property type="molecule type" value="Genomic_DNA"/>
</dbReference>
<dbReference type="RefSeq" id="WP_001247094.1">
    <property type="nucleotide sequence ID" value="NC_008253.1"/>
</dbReference>
<dbReference type="SMR" id="Q0TBG6"/>
<dbReference type="KEGG" id="ecp:ECP_3741"/>
<dbReference type="HOGENOM" id="CLU_050858_0_0_6"/>
<dbReference type="Proteomes" id="UP000009182">
    <property type="component" value="Chromosome"/>
</dbReference>
<dbReference type="GO" id="GO:0000175">
    <property type="term" value="F:3'-5'-RNA exonuclease activity"/>
    <property type="evidence" value="ECO:0007669"/>
    <property type="project" value="UniProtKB-UniRule"/>
</dbReference>
<dbReference type="GO" id="GO:0000049">
    <property type="term" value="F:tRNA binding"/>
    <property type="evidence" value="ECO:0007669"/>
    <property type="project" value="UniProtKB-UniRule"/>
</dbReference>
<dbReference type="GO" id="GO:0009022">
    <property type="term" value="F:tRNA nucleotidyltransferase activity"/>
    <property type="evidence" value="ECO:0007669"/>
    <property type="project" value="UniProtKB-UniRule"/>
</dbReference>
<dbReference type="GO" id="GO:0016075">
    <property type="term" value="P:rRNA catabolic process"/>
    <property type="evidence" value="ECO:0007669"/>
    <property type="project" value="UniProtKB-UniRule"/>
</dbReference>
<dbReference type="GO" id="GO:0006364">
    <property type="term" value="P:rRNA processing"/>
    <property type="evidence" value="ECO:0007669"/>
    <property type="project" value="UniProtKB-KW"/>
</dbReference>
<dbReference type="GO" id="GO:0008033">
    <property type="term" value="P:tRNA processing"/>
    <property type="evidence" value="ECO:0007669"/>
    <property type="project" value="UniProtKB-UniRule"/>
</dbReference>
<dbReference type="CDD" id="cd11362">
    <property type="entry name" value="RNase_PH_bact"/>
    <property type="match status" value="1"/>
</dbReference>
<dbReference type="FunFam" id="3.30.230.70:FF:000003">
    <property type="entry name" value="Ribonuclease PH"/>
    <property type="match status" value="1"/>
</dbReference>
<dbReference type="Gene3D" id="3.30.230.70">
    <property type="entry name" value="GHMP Kinase, N-terminal domain"/>
    <property type="match status" value="1"/>
</dbReference>
<dbReference type="HAMAP" id="MF_00564">
    <property type="entry name" value="RNase_PH"/>
    <property type="match status" value="1"/>
</dbReference>
<dbReference type="InterPro" id="IPR001247">
    <property type="entry name" value="ExoRNase_PH_dom1"/>
</dbReference>
<dbReference type="InterPro" id="IPR015847">
    <property type="entry name" value="ExoRNase_PH_dom2"/>
</dbReference>
<dbReference type="InterPro" id="IPR036345">
    <property type="entry name" value="ExoRNase_PH_dom2_sf"/>
</dbReference>
<dbReference type="InterPro" id="IPR027408">
    <property type="entry name" value="PNPase/RNase_PH_dom_sf"/>
</dbReference>
<dbReference type="InterPro" id="IPR020568">
    <property type="entry name" value="Ribosomal_Su5_D2-typ_SF"/>
</dbReference>
<dbReference type="InterPro" id="IPR050080">
    <property type="entry name" value="RNase_PH"/>
</dbReference>
<dbReference type="InterPro" id="IPR002381">
    <property type="entry name" value="RNase_PH_bac-type"/>
</dbReference>
<dbReference type="InterPro" id="IPR018336">
    <property type="entry name" value="RNase_PH_CS"/>
</dbReference>
<dbReference type="NCBIfam" id="TIGR01966">
    <property type="entry name" value="RNasePH"/>
    <property type="match status" value="1"/>
</dbReference>
<dbReference type="PANTHER" id="PTHR11953">
    <property type="entry name" value="EXOSOME COMPLEX COMPONENT"/>
    <property type="match status" value="1"/>
</dbReference>
<dbReference type="PANTHER" id="PTHR11953:SF0">
    <property type="entry name" value="EXOSOME COMPLEX COMPONENT RRP41"/>
    <property type="match status" value="1"/>
</dbReference>
<dbReference type="Pfam" id="PF01138">
    <property type="entry name" value="RNase_PH"/>
    <property type="match status" value="1"/>
</dbReference>
<dbReference type="Pfam" id="PF03725">
    <property type="entry name" value="RNase_PH_C"/>
    <property type="match status" value="1"/>
</dbReference>
<dbReference type="SUPFAM" id="SSF55666">
    <property type="entry name" value="Ribonuclease PH domain 2-like"/>
    <property type="match status" value="1"/>
</dbReference>
<dbReference type="SUPFAM" id="SSF54211">
    <property type="entry name" value="Ribosomal protein S5 domain 2-like"/>
    <property type="match status" value="1"/>
</dbReference>
<dbReference type="PROSITE" id="PS01277">
    <property type="entry name" value="RIBONUCLEASE_PH"/>
    <property type="match status" value="1"/>
</dbReference>
<reference key="1">
    <citation type="journal article" date="2006" name="Mol. Microbiol.">
        <title>Role of pathogenicity island-associated integrases in the genome plasticity of uropathogenic Escherichia coli strain 536.</title>
        <authorList>
            <person name="Hochhut B."/>
            <person name="Wilde C."/>
            <person name="Balling G."/>
            <person name="Middendorf B."/>
            <person name="Dobrindt U."/>
            <person name="Brzuszkiewicz E."/>
            <person name="Gottschalk G."/>
            <person name="Carniel E."/>
            <person name="Hacker J."/>
        </authorList>
    </citation>
    <scope>NUCLEOTIDE SEQUENCE [LARGE SCALE GENOMIC DNA]</scope>
    <source>
        <strain>536 / UPEC</strain>
    </source>
</reference>
<keyword id="KW-0548">Nucleotidyltransferase</keyword>
<keyword id="KW-0694">RNA-binding</keyword>
<keyword id="KW-0698">rRNA processing</keyword>
<keyword id="KW-0808">Transferase</keyword>
<keyword id="KW-0819">tRNA processing</keyword>
<keyword id="KW-0820">tRNA-binding</keyword>
<sequence>MRPAGRSNNQVRPVTLTRNYTKHAEGSVLVEFGDTKVLCTASIEEGVPRFLKGQGQGWITAEYGMLPRSTHTRNAREAAKGKQGGRTMEIQRLIARALRAAVDLKALGEFTITLDCDVLQADGGTRTASITGACVALADALQKLVENGKLKTNPMKGMVAAVSVGIVNGEAVCDLEYVEDSAAETDMNVVMTEDGRIIEVQGTAEGEPFTHEELLTLLALARGGIESIVVTQKAALAN</sequence>
<proteinExistence type="inferred from homology"/>
<organism>
    <name type="scientific">Escherichia coli O6:K15:H31 (strain 536 / UPEC)</name>
    <dbReference type="NCBI Taxonomy" id="362663"/>
    <lineage>
        <taxon>Bacteria</taxon>
        <taxon>Pseudomonadati</taxon>
        <taxon>Pseudomonadota</taxon>
        <taxon>Gammaproteobacteria</taxon>
        <taxon>Enterobacterales</taxon>
        <taxon>Enterobacteriaceae</taxon>
        <taxon>Escherichia</taxon>
    </lineage>
</organism>
<name>RNPH_ECOL5</name>
<accession>Q0TBG6</accession>
<evidence type="ECO:0000255" key="1">
    <source>
        <dbReference type="HAMAP-Rule" id="MF_00564"/>
    </source>
</evidence>
<comment type="function">
    <text evidence="1">Phosphorolytic 3'-5' exoribonuclease that plays an important role in tRNA 3'-end maturation. Removes nucleotide residues following the 3'-CCA terminus of tRNAs; can also add nucleotides to the ends of RNA molecules by using nucleoside diphosphates as substrates, but this may not be physiologically important. Probably plays a role in initiation of 16S rRNA degradation (leading to ribosome degradation) during starvation.</text>
</comment>
<comment type="catalytic activity">
    <reaction evidence="1">
        <text>tRNA(n+1) + phosphate = tRNA(n) + a ribonucleoside 5'-diphosphate</text>
        <dbReference type="Rhea" id="RHEA:10628"/>
        <dbReference type="Rhea" id="RHEA-COMP:17343"/>
        <dbReference type="Rhea" id="RHEA-COMP:17344"/>
        <dbReference type="ChEBI" id="CHEBI:43474"/>
        <dbReference type="ChEBI" id="CHEBI:57930"/>
        <dbReference type="ChEBI" id="CHEBI:173114"/>
        <dbReference type="EC" id="2.7.7.56"/>
    </reaction>
</comment>
<comment type="subunit">
    <text evidence="1">Homohexameric ring arranged as a trimer of dimers.</text>
</comment>
<comment type="similarity">
    <text evidence="1">Belongs to the RNase PH family.</text>
</comment>
<gene>
    <name evidence="1" type="primary">rph</name>
    <name type="ordered locus">ECP_3741</name>
</gene>
<feature type="chain" id="PRO_1000024803" description="Ribonuclease PH">
    <location>
        <begin position="1"/>
        <end position="238"/>
    </location>
</feature>
<feature type="binding site" evidence="1">
    <location>
        <position position="86"/>
    </location>
    <ligand>
        <name>phosphate</name>
        <dbReference type="ChEBI" id="CHEBI:43474"/>
        <note>substrate</note>
    </ligand>
</feature>
<feature type="binding site" evidence="1">
    <location>
        <begin position="124"/>
        <end position="126"/>
    </location>
    <ligand>
        <name>phosphate</name>
        <dbReference type="ChEBI" id="CHEBI:43474"/>
        <note>substrate</note>
    </ligand>
</feature>